<name>KDUI_SHISS</name>
<protein>
    <recommendedName>
        <fullName evidence="1">4-deoxy-L-threo-5-hexosulose-uronate ketol-isomerase</fullName>
        <ecNumber evidence="1">5.3.1.17</ecNumber>
    </recommendedName>
    <alternativeName>
        <fullName evidence="1">5-keto-4-deoxyuronate isomerase</fullName>
    </alternativeName>
    <alternativeName>
        <fullName evidence="1">DKI isomerase</fullName>
    </alternativeName>
</protein>
<feature type="chain" id="PRO_1000045092" description="4-deoxy-L-threo-5-hexosulose-uronate ketol-isomerase">
    <location>
        <begin position="1"/>
        <end position="278"/>
    </location>
</feature>
<feature type="binding site" evidence="1">
    <location>
        <position position="196"/>
    </location>
    <ligand>
        <name>Zn(2+)</name>
        <dbReference type="ChEBI" id="CHEBI:29105"/>
    </ligand>
</feature>
<feature type="binding site" evidence="1">
    <location>
        <position position="198"/>
    </location>
    <ligand>
        <name>Zn(2+)</name>
        <dbReference type="ChEBI" id="CHEBI:29105"/>
    </ligand>
</feature>
<feature type="binding site" evidence="1">
    <location>
        <position position="203"/>
    </location>
    <ligand>
        <name>Zn(2+)</name>
        <dbReference type="ChEBI" id="CHEBI:29105"/>
    </ligand>
</feature>
<feature type="binding site" evidence="1">
    <location>
        <position position="245"/>
    </location>
    <ligand>
        <name>Zn(2+)</name>
        <dbReference type="ChEBI" id="CHEBI:29105"/>
    </ligand>
</feature>
<proteinExistence type="inferred from homology"/>
<comment type="function">
    <text evidence="1">Catalyzes the isomerization of 5-dehydro-4-deoxy-D-glucuronate to 3-deoxy-D-glycero-2,5-hexodiulosonate.</text>
</comment>
<comment type="catalytic activity">
    <reaction evidence="1">
        <text>5-dehydro-4-deoxy-D-glucuronate = 3-deoxy-D-glycero-2,5-hexodiulosonate</text>
        <dbReference type="Rhea" id="RHEA:23896"/>
        <dbReference type="ChEBI" id="CHEBI:17117"/>
        <dbReference type="ChEBI" id="CHEBI:29071"/>
        <dbReference type="EC" id="5.3.1.17"/>
    </reaction>
</comment>
<comment type="cofactor">
    <cofactor evidence="1">
        <name>Zn(2+)</name>
        <dbReference type="ChEBI" id="CHEBI:29105"/>
    </cofactor>
    <text evidence="1">Binds 1 zinc ion per subunit.</text>
</comment>
<comment type="pathway">
    <text evidence="1">Glycan metabolism; pectin degradation; 2-dehydro-3-deoxy-D-gluconate from pectin: step 4/5.</text>
</comment>
<comment type="similarity">
    <text evidence="1">Belongs to the KduI family.</text>
</comment>
<evidence type="ECO:0000255" key="1">
    <source>
        <dbReference type="HAMAP-Rule" id="MF_00687"/>
    </source>
</evidence>
<organism>
    <name type="scientific">Shigella sonnei (strain Ss046)</name>
    <dbReference type="NCBI Taxonomy" id="300269"/>
    <lineage>
        <taxon>Bacteria</taxon>
        <taxon>Pseudomonadati</taxon>
        <taxon>Pseudomonadota</taxon>
        <taxon>Gammaproteobacteria</taxon>
        <taxon>Enterobacterales</taxon>
        <taxon>Enterobacteriaceae</taxon>
        <taxon>Shigella</taxon>
    </lineage>
</organism>
<gene>
    <name evidence="1" type="primary">kduI</name>
    <name type="ordered locus">SSON_3003</name>
</gene>
<dbReference type="EC" id="5.3.1.17" evidence="1"/>
<dbReference type="EMBL" id="CP000038">
    <property type="protein sequence ID" value="AAZ89597.1"/>
    <property type="molecule type" value="Genomic_DNA"/>
</dbReference>
<dbReference type="RefSeq" id="WP_000383233.1">
    <property type="nucleotide sequence ID" value="NC_007384.1"/>
</dbReference>
<dbReference type="SMR" id="Q3YY15"/>
<dbReference type="KEGG" id="ssn:SSON_3003"/>
<dbReference type="HOGENOM" id="CLU_062609_0_0_6"/>
<dbReference type="UniPathway" id="UPA00545">
    <property type="reaction ID" value="UER00826"/>
</dbReference>
<dbReference type="Proteomes" id="UP000002529">
    <property type="component" value="Chromosome"/>
</dbReference>
<dbReference type="GO" id="GO:0008697">
    <property type="term" value="F:4-deoxy-L-threo-5-hexosulose-uronate ketol-isomerase activity"/>
    <property type="evidence" value="ECO:0007669"/>
    <property type="project" value="UniProtKB-UniRule"/>
</dbReference>
<dbReference type="GO" id="GO:0008270">
    <property type="term" value="F:zinc ion binding"/>
    <property type="evidence" value="ECO:0007669"/>
    <property type="project" value="UniProtKB-UniRule"/>
</dbReference>
<dbReference type="GO" id="GO:0019698">
    <property type="term" value="P:D-galacturonate catabolic process"/>
    <property type="evidence" value="ECO:0007669"/>
    <property type="project" value="TreeGrafter"/>
</dbReference>
<dbReference type="GO" id="GO:0042840">
    <property type="term" value="P:D-glucuronate catabolic process"/>
    <property type="evidence" value="ECO:0007669"/>
    <property type="project" value="TreeGrafter"/>
</dbReference>
<dbReference type="GO" id="GO:0045490">
    <property type="term" value="P:pectin catabolic process"/>
    <property type="evidence" value="ECO:0007669"/>
    <property type="project" value="UniProtKB-UniRule"/>
</dbReference>
<dbReference type="CDD" id="cd20491">
    <property type="entry name" value="cupin_KduI_C"/>
    <property type="match status" value="1"/>
</dbReference>
<dbReference type="CDD" id="cd20294">
    <property type="entry name" value="cupin_KduI_N"/>
    <property type="match status" value="1"/>
</dbReference>
<dbReference type="FunFam" id="2.60.120.10:FF:000018">
    <property type="entry name" value="4-deoxy-L-threo-5-hexosulose-uronate ketol-isomerase"/>
    <property type="match status" value="1"/>
</dbReference>
<dbReference type="FunFam" id="2.60.120.520:FF:000001">
    <property type="entry name" value="4-deoxy-L-threo-5-hexosulose-uronate ketol-isomerase"/>
    <property type="match status" value="1"/>
</dbReference>
<dbReference type="Gene3D" id="2.60.120.10">
    <property type="entry name" value="Jelly Rolls"/>
    <property type="match status" value="1"/>
</dbReference>
<dbReference type="Gene3D" id="2.60.120.520">
    <property type="entry name" value="pectin degrading enzyme 5-keto 4- deoxyuronate isomerase, domain 1"/>
    <property type="match status" value="1"/>
</dbReference>
<dbReference type="HAMAP" id="MF_00687">
    <property type="entry name" value="KduI"/>
    <property type="match status" value="1"/>
</dbReference>
<dbReference type="InterPro" id="IPR007045">
    <property type="entry name" value="KduI"/>
</dbReference>
<dbReference type="InterPro" id="IPR021120">
    <property type="entry name" value="KduI/IolB_isomerase"/>
</dbReference>
<dbReference type="InterPro" id="IPR027449">
    <property type="entry name" value="KduI_N"/>
</dbReference>
<dbReference type="InterPro" id="IPR014710">
    <property type="entry name" value="RmlC-like_jellyroll"/>
</dbReference>
<dbReference type="InterPro" id="IPR011051">
    <property type="entry name" value="RmlC_Cupin_sf"/>
</dbReference>
<dbReference type="NCBIfam" id="NF002091">
    <property type="entry name" value="PRK00924.1"/>
    <property type="match status" value="1"/>
</dbReference>
<dbReference type="PANTHER" id="PTHR38461">
    <property type="entry name" value="4-DEOXY-L-THREO-5-HEXOSULOSE-URONATE KETOL-ISOMERASE"/>
    <property type="match status" value="1"/>
</dbReference>
<dbReference type="PANTHER" id="PTHR38461:SF1">
    <property type="entry name" value="4-DEOXY-L-THREO-5-HEXOSULOSE-URONATE KETOL-ISOMERASE"/>
    <property type="match status" value="1"/>
</dbReference>
<dbReference type="Pfam" id="PF04962">
    <property type="entry name" value="KduI"/>
    <property type="match status" value="1"/>
</dbReference>
<dbReference type="PIRSF" id="PIRSF006625">
    <property type="entry name" value="KduI"/>
    <property type="match status" value="1"/>
</dbReference>
<dbReference type="SUPFAM" id="SSF51182">
    <property type="entry name" value="RmlC-like cupins"/>
    <property type="match status" value="1"/>
</dbReference>
<accession>Q3YY15</accession>
<reference key="1">
    <citation type="journal article" date="2005" name="Nucleic Acids Res.">
        <title>Genome dynamics and diversity of Shigella species, the etiologic agents of bacillary dysentery.</title>
        <authorList>
            <person name="Yang F."/>
            <person name="Yang J."/>
            <person name="Zhang X."/>
            <person name="Chen L."/>
            <person name="Jiang Y."/>
            <person name="Yan Y."/>
            <person name="Tang X."/>
            <person name="Wang J."/>
            <person name="Xiong Z."/>
            <person name="Dong J."/>
            <person name="Xue Y."/>
            <person name="Zhu Y."/>
            <person name="Xu X."/>
            <person name="Sun L."/>
            <person name="Chen S."/>
            <person name="Nie H."/>
            <person name="Peng J."/>
            <person name="Xu J."/>
            <person name="Wang Y."/>
            <person name="Yuan Z."/>
            <person name="Wen Y."/>
            <person name="Yao Z."/>
            <person name="Shen Y."/>
            <person name="Qiang B."/>
            <person name="Hou Y."/>
            <person name="Yu J."/>
            <person name="Jin Q."/>
        </authorList>
    </citation>
    <scope>NUCLEOTIDE SEQUENCE [LARGE SCALE GENOMIC DNA]</scope>
    <source>
        <strain>Ss046</strain>
    </source>
</reference>
<sequence length="278" mass="31090">MDVRQSIHSAHAKTLDTQGLRNEFLVEKVFVADEYTMVYSHIDRIIVGGIMPITKTVSVGGEVGKQLGVSYFLERRELGVINIGGAGTITVDGQCYEIGHRDALYVGKGAKEVVFASIDTATPAKFYYNCAPAHTTYPTKKVTPDEVSPVTLGDNLTSNRRTINKYFVPDVLETCQLSMGLTELAPGNLWNTMPCHTHERRMEVYFYFNMDDDACVFHMMGQPQETRHIVMHNEQAVISPSWSIHSGVGTKAYTFIWGMVGENQVFDDMDHVAVKDLR</sequence>
<keyword id="KW-0413">Isomerase</keyword>
<keyword id="KW-0479">Metal-binding</keyword>
<keyword id="KW-1185">Reference proteome</keyword>
<keyword id="KW-0862">Zinc</keyword>